<comment type="function">
    <text evidence="1">Bidirectionally degrades single-stranded DNA into large acid-insoluble oligonucleotides, which are then degraded further into small acid-soluble oligonucleotides.</text>
</comment>
<comment type="catalytic activity">
    <reaction evidence="1">
        <text>Exonucleolytic cleavage in either 5'- to 3'- or 3'- to 5'-direction to yield nucleoside 5'-phosphates.</text>
        <dbReference type="EC" id="3.1.11.6"/>
    </reaction>
</comment>
<comment type="subunit">
    <text evidence="1">Heterooligomer composed of large and small subunits.</text>
</comment>
<comment type="subcellular location">
    <subcellularLocation>
        <location evidence="1">Cytoplasm</location>
    </subcellularLocation>
</comment>
<comment type="similarity">
    <text evidence="1">Belongs to the XseA family.</text>
</comment>
<dbReference type="EC" id="3.1.11.6" evidence="1"/>
<dbReference type="EMBL" id="CP000936">
    <property type="protein sequence ID" value="ACA36104.1"/>
    <property type="molecule type" value="Genomic_DNA"/>
</dbReference>
<dbReference type="RefSeq" id="WP_000417467.1">
    <property type="nucleotide sequence ID" value="NC_010380.1"/>
</dbReference>
<dbReference type="SMR" id="B1IC09"/>
<dbReference type="KEGG" id="spv:SPH_1325"/>
<dbReference type="HOGENOM" id="CLU_023625_3_1_9"/>
<dbReference type="Proteomes" id="UP000002163">
    <property type="component" value="Chromosome"/>
</dbReference>
<dbReference type="GO" id="GO:0005737">
    <property type="term" value="C:cytoplasm"/>
    <property type="evidence" value="ECO:0007669"/>
    <property type="project" value="UniProtKB-SubCell"/>
</dbReference>
<dbReference type="GO" id="GO:0009318">
    <property type="term" value="C:exodeoxyribonuclease VII complex"/>
    <property type="evidence" value="ECO:0007669"/>
    <property type="project" value="InterPro"/>
</dbReference>
<dbReference type="GO" id="GO:0008855">
    <property type="term" value="F:exodeoxyribonuclease VII activity"/>
    <property type="evidence" value="ECO:0007669"/>
    <property type="project" value="UniProtKB-UniRule"/>
</dbReference>
<dbReference type="GO" id="GO:0003676">
    <property type="term" value="F:nucleic acid binding"/>
    <property type="evidence" value="ECO:0007669"/>
    <property type="project" value="InterPro"/>
</dbReference>
<dbReference type="GO" id="GO:0006308">
    <property type="term" value="P:DNA catabolic process"/>
    <property type="evidence" value="ECO:0007669"/>
    <property type="project" value="UniProtKB-UniRule"/>
</dbReference>
<dbReference type="CDD" id="cd04489">
    <property type="entry name" value="ExoVII_LU_OBF"/>
    <property type="match status" value="1"/>
</dbReference>
<dbReference type="HAMAP" id="MF_00378">
    <property type="entry name" value="Exonuc_7_L"/>
    <property type="match status" value="1"/>
</dbReference>
<dbReference type="InterPro" id="IPR003753">
    <property type="entry name" value="Exonuc_VII_L"/>
</dbReference>
<dbReference type="InterPro" id="IPR020579">
    <property type="entry name" value="Exonuc_VII_lsu_C"/>
</dbReference>
<dbReference type="InterPro" id="IPR025824">
    <property type="entry name" value="OB-fold_nuc-bd_dom"/>
</dbReference>
<dbReference type="NCBIfam" id="TIGR00237">
    <property type="entry name" value="xseA"/>
    <property type="match status" value="1"/>
</dbReference>
<dbReference type="PANTHER" id="PTHR30008">
    <property type="entry name" value="EXODEOXYRIBONUCLEASE 7 LARGE SUBUNIT"/>
    <property type="match status" value="1"/>
</dbReference>
<dbReference type="PANTHER" id="PTHR30008:SF0">
    <property type="entry name" value="EXODEOXYRIBONUCLEASE 7 LARGE SUBUNIT"/>
    <property type="match status" value="1"/>
</dbReference>
<dbReference type="Pfam" id="PF02601">
    <property type="entry name" value="Exonuc_VII_L"/>
    <property type="match status" value="1"/>
</dbReference>
<dbReference type="Pfam" id="PF13742">
    <property type="entry name" value="tRNA_anti_2"/>
    <property type="match status" value="1"/>
</dbReference>
<accession>B1IC09</accession>
<protein>
    <recommendedName>
        <fullName evidence="1">Exodeoxyribonuclease 7 large subunit</fullName>
        <ecNumber evidence="1">3.1.11.6</ecNumber>
    </recommendedName>
    <alternativeName>
        <fullName evidence="1">Exodeoxyribonuclease VII large subunit</fullName>
        <shortName evidence="1">Exonuclease VII large subunit</shortName>
    </alternativeName>
</protein>
<keyword id="KW-0963">Cytoplasm</keyword>
<keyword id="KW-0269">Exonuclease</keyword>
<keyword id="KW-0378">Hydrolase</keyword>
<keyword id="KW-0540">Nuclease</keyword>
<sequence>MEKYLSVTTLTKYLKMKFDKDPYLERVYLTGQVSNFRKRPTHQYFSLKDDHAVIQATIWSGIYQKLGFDLEEGMKINVIGRVQVYEPSGSYSIIIEKAEPDGVGALAIQFEQLKKKLTEEGLFQERFKQALPQFSKRIGVVTSRSGAVIRDIITTVSRRFPGVDILLYPTKVQGEGAAEEIARNIARANQRDDLDLLIIGRGGGSIEDLWAFNEEIVVRAIFESRLPVISSVGHETDVTLADFVADRRAATPTAAAELATPVTKLDVLTHLQNQEKRMATAVRNVLSKKQEALKKCSQSVIFRQPERLYDGYLQRLDQLQLRLKQSLRTRISDNKQLVQARTHQLVQLSPVTKIQRYQDRLGQLDKLLDSQMALVYDAKVAEAKRLSEALLMLDTSRIVARGYAIVKKEESVVDSVESLKKKDQVTLLMRDGQVELEVKDVKTKEI</sequence>
<reference key="1">
    <citation type="journal article" date="2010" name="Genome Biol.">
        <title>Structure and dynamics of the pan-genome of Streptococcus pneumoniae and closely related species.</title>
        <authorList>
            <person name="Donati C."/>
            <person name="Hiller N.L."/>
            <person name="Tettelin H."/>
            <person name="Muzzi A."/>
            <person name="Croucher N.J."/>
            <person name="Angiuoli S.V."/>
            <person name="Oggioni M."/>
            <person name="Dunning Hotopp J.C."/>
            <person name="Hu F.Z."/>
            <person name="Riley D.R."/>
            <person name="Covacci A."/>
            <person name="Mitchell T.J."/>
            <person name="Bentley S.D."/>
            <person name="Kilian M."/>
            <person name="Ehrlich G.D."/>
            <person name="Rappuoli R."/>
            <person name="Moxon E.R."/>
            <person name="Masignani V."/>
        </authorList>
    </citation>
    <scope>NUCLEOTIDE SEQUENCE [LARGE SCALE GENOMIC DNA]</scope>
    <source>
        <strain>Hungary19A-6</strain>
    </source>
</reference>
<proteinExistence type="inferred from homology"/>
<gene>
    <name evidence="1" type="primary">xseA</name>
    <name type="ordered locus">SPH_1325</name>
</gene>
<evidence type="ECO:0000255" key="1">
    <source>
        <dbReference type="HAMAP-Rule" id="MF_00378"/>
    </source>
</evidence>
<organism>
    <name type="scientific">Streptococcus pneumoniae (strain Hungary19A-6)</name>
    <dbReference type="NCBI Taxonomy" id="487214"/>
    <lineage>
        <taxon>Bacteria</taxon>
        <taxon>Bacillati</taxon>
        <taxon>Bacillota</taxon>
        <taxon>Bacilli</taxon>
        <taxon>Lactobacillales</taxon>
        <taxon>Streptococcaceae</taxon>
        <taxon>Streptococcus</taxon>
    </lineage>
</organism>
<feature type="chain" id="PRO_1000122095" description="Exodeoxyribonuclease 7 large subunit">
    <location>
        <begin position="1"/>
        <end position="446"/>
    </location>
</feature>
<name>EX7L_STRPI</name>